<evidence type="ECO:0000255" key="1">
    <source>
        <dbReference type="HAMAP-Rule" id="MF_01522"/>
    </source>
</evidence>
<dbReference type="EMBL" id="AE009948">
    <property type="protein sequence ID" value="AAM99971.1"/>
    <property type="molecule type" value="Genomic_DNA"/>
</dbReference>
<dbReference type="RefSeq" id="NP_688099.1">
    <property type="nucleotide sequence ID" value="NC_004116.1"/>
</dbReference>
<dbReference type="RefSeq" id="WP_001164946.1">
    <property type="nucleotide sequence ID" value="NC_004116.1"/>
</dbReference>
<dbReference type="STRING" id="208435.SAG1090"/>
<dbReference type="KEGG" id="sag:SAG1090"/>
<dbReference type="PATRIC" id="fig|208435.3.peg.1098"/>
<dbReference type="HOGENOM" id="CLU_008142_4_1_9"/>
<dbReference type="OrthoDB" id="9805577at2"/>
<dbReference type="Proteomes" id="UP000000821">
    <property type="component" value="Chromosome"/>
</dbReference>
<dbReference type="GO" id="GO:0005886">
    <property type="term" value="C:plasma membrane"/>
    <property type="evidence" value="ECO:0007669"/>
    <property type="project" value="UniProtKB-SubCell"/>
</dbReference>
<dbReference type="GO" id="GO:0015079">
    <property type="term" value="F:potassium ion transmembrane transporter activity"/>
    <property type="evidence" value="ECO:0007669"/>
    <property type="project" value="UniProtKB-UniRule"/>
</dbReference>
<dbReference type="GO" id="GO:0015293">
    <property type="term" value="F:symporter activity"/>
    <property type="evidence" value="ECO:0007669"/>
    <property type="project" value="UniProtKB-UniRule"/>
</dbReference>
<dbReference type="HAMAP" id="MF_01522">
    <property type="entry name" value="Kup"/>
    <property type="match status" value="1"/>
</dbReference>
<dbReference type="InterPro" id="IPR003855">
    <property type="entry name" value="K+_transporter"/>
</dbReference>
<dbReference type="InterPro" id="IPR053952">
    <property type="entry name" value="K_trans_C"/>
</dbReference>
<dbReference type="InterPro" id="IPR053951">
    <property type="entry name" value="K_trans_N"/>
</dbReference>
<dbReference type="InterPro" id="IPR023051">
    <property type="entry name" value="Kup"/>
</dbReference>
<dbReference type="PANTHER" id="PTHR30540">
    <property type="entry name" value="OSMOTIC STRESS POTASSIUM TRANSPORTER"/>
    <property type="match status" value="1"/>
</dbReference>
<dbReference type="PANTHER" id="PTHR30540:SF20">
    <property type="entry name" value="POTASSIUM TRANSPORTER 6"/>
    <property type="match status" value="1"/>
</dbReference>
<dbReference type="Pfam" id="PF02705">
    <property type="entry name" value="K_trans"/>
    <property type="match status" value="1"/>
</dbReference>
<dbReference type="Pfam" id="PF22776">
    <property type="entry name" value="K_trans_C"/>
    <property type="match status" value="1"/>
</dbReference>
<organism>
    <name type="scientific">Streptococcus agalactiae serotype V (strain ATCC BAA-611 / 2603 V/R)</name>
    <dbReference type="NCBI Taxonomy" id="208435"/>
    <lineage>
        <taxon>Bacteria</taxon>
        <taxon>Bacillati</taxon>
        <taxon>Bacillota</taxon>
        <taxon>Bacilli</taxon>
        <taxon>Lactobacillales</taxon>
        <taxon>Streptococcaceae</taxon>
        <taxon>Streptococcus</taxon>
    </lineage>
</organism>
<gene>
    <name evidence="1" type="primary">kup</name>
    <name type="ordered locus">SAG1090</name>
</gene>
<protein>
    <recommendedName>
        <fullName evidence="1">Probable potassium transport system protein Kup</fullName>
    </recommendedName>
</protein>
<sequence>MQHVNHSSFDKASKAGFIIALGIVYGDIGTSPLYTMQSLVENQGGISSVTESFILGSISLIIWTLTLITTIKYVLVALKADNHHEGGIFSLYTLVRKMTPWLIVPAVIGGATLLSDGALTPAVTVTSAVEGLKVVPSLQHIFQNQSNVIFATLFILLLLFAIQRFGTGVIGKLFGPIMFIWFAFLGISGLLNSFAHPEVFKAINPYYGLKLLFSPENHKGIFILGSIFLATTGAEALYSDLGHVGRGNIHVSWPFVKVAIILSYCGQGAWILANKNAGNELNPFFASIPSQFTMHVVILATLAAIIASQALISGSFTLVSEAMRLKIFPQFRSTYPGDNIGQTYIPVINWFLFAITTSIVLLFKTSAHMEAAYGLAITITMLMTTILLSFFLIQKGVKRGLVLLMMIFFGILEGIFFLASAVKFMHGGYVVVIIAVAIIFIMTIWYKGSKIVSRYVKLLDLKDYIGQLDKLRHDHRYPIYHTNVVYLTNRMEEDMIDKSIMYSILDKRPKKAQVYWFVNIKVTDEPYTAEYKVDMMGTDFIVKVELYLGFKMRQTVSRYLRTIVEELLESGRLPKQGKTYSVRPDSNVGDFRFIVLDERFSSSQNLKPGERFVMLMKSSIKHWTATPIRWFGLQFSEVTTEVVPLIFTANRGLPIKEKSELTTTGD</sequence>
<feature type="chain" id="PRO_0000209060" description="Probable potassium transport system protein Kup">
    <location>
        <begin position="1"/>
        <end position="666"/>
    </location>
</feature>
<feature type="transmembrane region" description="Helical" evidence="1">
    <location>
        <begin position="16"/>
        <end position="36"/>
    </location>
</feature>
<feature type="transmembrane region" description="Helical" evidence="1">
    <location>
        <begin position="58"/>
        <end position="78"/>
    </location>
</feature>
<feature type="transmembrane region" description="Helical" evidence="1">
    <location>
        <begin position="99"/>
        <end position="119"/>
    </location>
</feature>
<feature type="transmembrane region" description="Helical" evidence="1">
    <location>
        <begin position="141"/>
        <end position="161"/>
    </location>
</feature>
<feature type="transmembrane region" description="Helical" evidence="1">
    <location>
        <begin position="167"/>
        <end position="187"/>
    </location>
</feature>
<feature type="transmembrane region" description="Helical" evidence="1">
    <location>
        <begin position="221"/>
        <end position="241"/>
    </location>
</feature>
<feature type="transmembrane region" description="Helical" evidence="1">
    <location>
        <begin position="253"/>
        <end position="273"/>
    </location>
</feature>
<feature type="transmembrane region" description="Helical" evidence="1">
    <location>
        <begin position="292"/>
        <end position="312"/>
    </location>
</feature>
<feature type="transmembrane region" description="Helical" evidence="1">
    <location>
        <begin position="343"/>
        <end position="363"/>
    </location>
</feature>
<feature type="transmembrane region" description="Helical" evidence="1">
    <location>
        <begin position="373"/>
        <end position="393"/>
    </location>
</feature>
<feature type="transmembrane region" description="Helical" evidence="1">
    <location>
        <begin position="402"/>
        <end position="422"/>
    </location>
</feature>
<feature type="transmembrane region" description="Helical" evidence="1">
    <location>
        <begin position="424"/>
        <end position="444"/>
    </location>
</feature>
<reference key="1">
    <citation type="journal article" date="2002" name="Proc. Natl. Acad. Sci. U.S.A.">
        <title>Complete genome sequence and comparative genomic analysis of an emerging human pathogen, serotype V Streptococcus agalactiae.</title>
        <authorList>
            <person name="Tettelin H."/>
            <person name="Masignani V."/>
            <person name="Cieslewicz M.J."/>
            <person name="Eisen J.A."/>
            <person name="Peterson S.N."/>
            <person name="Wessels M.R."/>
            <person name="Paulsen I.T."/>
            <person name="Nelson K.E."/>
            <person name="Margarit I."/>
            <person name="Read T.D."/>
            <person name="Madoff L.C."/>
            <person name="Wolf A.M."/>
            <person name="Beanan M.J."/>
            <person name="Brinkac L.M."/>
            <person name="Daugherty S.C."/>
            <person name="DeBoy R.T."/>
            <person name="Durkin A.S."/>
            <person name="Kolonay J.F."/>
            <person name="Madupu R."/>
            <person name="Lewis M.R."/>
            <person name="Radune D."/>
            <person name="Fedorova N.B."/>
            <person name="Scanlan D."/>
            <person name="Khouri H.M."/>
            <person name="Mulligan S."/>
            <person name="Carty H.A."/>
            <person name="Cline R.T."/>
            <person name="Van Aken S.E."/>
            <person name="Gill J."/>
            <person name="Scarselli M."/>
            <person name="Mora M."/>
            <person name="Iacobini E.T."/>
            <person name="Brettoni C."/>
            <person name="Galli G."/>
            <person name="Mariani M."/>
            <person name="Vegni F."/>
            <person name="Maione D."/>
            <person name="Rinaudo D."/>
            <person name="Rappuoli R."/>
            <person name="Telford J.L."/>
            <person name="Kasper D.L."/>
            <person name="Grandi G."/>
            <person name="Fraser C.M."/>
        </authorList>
    </citation>
    <scope>NUCLEOTIDE SEQUENCE [LARGE SCALE GENOMIC DNA]</scope>
    <source>
        <strain>ATCC BAA-611 / 2603 V/R</strain>
    </source>
</reference>
<comment type="function">
    <text evidence="1">Transport of potassium into the cell. Likely operates as a K(+):H(+) symporter.</text>
</comment>
<comment type="catalytic activity">
    <reaction evidence="1">
        <text>K(+)(in) + H(+)(in) = K(+)(out) + H(+)(out)</text>
        <dbReference type="Rhea" id="RHEA:28490"/>
        <dbReference type="ChEBI" id="CHEBI:15378"/>
        <dbReference type="ChEBI" id="CHEBI:29103"/>
    </reaction>
    <physiologicalReaction direction="right-to-left" evidence="1">
        <dbReference type="Rhea" id="RHEA:28492"/>
    </physiologicalReaction>
</comment>
<comment type="subcellular location">
    <subcellularLocation>
        <location evidence="1">Cell membrane</location>
        <topology evidence="1">Multi-pass membrane protein</topology>
    </subcellularLocation>
</comment>
<comment type="similarity">
    <text evidence="1">Belongs to the HAK/KUP transporter (TC 2.A.72) family.</text>
</comment>
<keyword id="KW-1003">Cell membrane</keyword>
<keyword id="KW-0406">Ion transport</keyword>
<keyword id="KW-0472">Membrane</keyword>
<keyword id="KW-0630">Potassium</keyword>
<keyword id="KW-0633">Potassium transport</keyword>
<keyword id="KW-1185">Reference proteome</keyword>
<keyword id="KW-0769">Symport</keyword>
<keyword id="KW-0812">Transmembrane</keyword>
<keyword id="KW-1133">Transmembrane helix</keyword>
<keyword id="KW-0813">Transport</keyword>
<name>KUP_STRA5</name>
<accession>Q8DZL1</accession>
<proteinExistence type="inferred from homology"/>